<feature type="chain" id="PRO_0000444671" description="Tubulin alpha-3D chain">
    <location>
        <begin position="1"/>
        <end position="450"/>
    </location>
</feature>
<feature type="chain" id="PRO_0000444672" description="Detyrosinated tubulin alpha-3D chain" evidence="17 18">
    <location>
        <begin position="1"/>
        <end position="449"/>
    </location>
</feature>
<feature type="short sequence motif" description="MREC motif" evidence="3">
    <location>
        <begin position="1"/>
        <end position="4"/>
    </location>
</feature>
<feature type="active site" evidence="3">
    <location>
        <position position="254"/>
    </location>
</feature>
<feature type="binding site" evidence="3">
    <location>
        <position position="11"/>
    </location>
    <ligand>
        <name>GTP</name>
        <dbReference type="ChEBI" id="CHEBI:37565"/>
    </ligand>
</feature>
<feature type="binding site" evidence="3">
    <location>
        <position position="71"/>
    </location>
    <ligand>
        <name>GTP</name>
        <dbReference type="ChEBI" id="CHEBI:37565"/>
    </ligand>
</feature>
<feature type="binding site" evidence="3">
    <location>
        <position position="71"/>
    </location>
    <ligand>
        <name>Mg(2+)</name>
        <dbReference type="ChEBI" id="CHEBI:18420"/>
    </ligand>
</feature>
<feature type="binding site" evidence="3">
    <location>
        <position position="140"/>
    </location>
    <ligand>
        <name>GTP</name>
        <dbReference type="ChEBI" id="CHEBI:37565"/>
    </ligand>
</feature>
<feature type="binding site" evidence="3">
    <location>
        <position position="144"/>
    </location>
    <ligand>
        <name>GTP</name>
        <dbReference type="ChEBI" id="CHEBI:37565"/>
    </ligand>
</feature>
<feature type="binding site" evidence="3">
    <location>
        <position position="145"/>
    </location>
    <ligand>
        <name>GTP</name>
        <dbReference type="ChEBI" id="CHEBI:37565"/>
    </ligand>
</feature>
<feature type="binding site" evidence="3">
    <location>
        <position position="179"/>
    </location>
    <ligand>
        <name>GTP</name>
        <dbReference type="ChEBI" id="CHEBI:37565"/>
    </ligand>
</feature>
<feature type="binding site" evidence="3">
    <location>
        <position position="206"/>
    </location>
    <ligand>
        <name>GTP</name>
        <dbReference type="ChEBI" id="CHEBI:37565"/>
    </ligand>
</feature>
<feature type="binding site" evidence="3">
    <location>
        <position position="228"/>
    </location>
    <ligand>
        <name>GTP</name>
        <dbReference type="ChEBI" id="CHEBI:37565"/>
    </ligand>
</feature>
<feature type="site" description="Involved in polymerization">
    <location>
        <position position="450"/>
    </location>
</feature>
<feature type="modified residue" description="N6-acetyllysine" evidence="8">
    <location>
        <position position="40"/>
    </location>
</feature>
<feature type="modified residue" description="3'-nitrotyrosine" evidence="5">
    <location>
        <position position="282"/>
    </location>
</feature>
<feature type="modified residue" description="Phosphoserine" evidence="5">
    <location>
        <position position="439"/>
    </location>
</feature>
<feature type="modified residue" description="3'-nitrotyrosine" evidence="7">
    <location>
        <position position="450"/>
    </location>
</feature>
<feature type="sequence variant" id="VAR_080471" description="In KTCN9; loss of protein." evidence="12">
    <location>
        <begin position="11"/>
        <end position="450"/>
    </location>
</feature>
<feature type="sequence conflict" description="In Ref. 2; AAH57810." evidence="15" ref="2">
    <original>C</original>
    <variation>Y</variation>
    <location>
        <position position="305"/>
    </location>
</feature>
<comment type="function">
    <text>Tubulin is the major constituent of microtubules, a cylinder consisting of laterally associated linear protofilaments composed of alpha- and beta-tubulin heterodimers. Microtubules grow by the addition of GTP-tubulin dimers to the microtubule end, where a stabilizing cap forms. Below the cap, tubulin dimers are in GDP-bound state, owing to GTPase activity of alpha-tubulin.</text>
</comment>
<comment type="catalytic activity">
    <reaction evidence="3">
        <text>GTP + H2O = GDP + phosphate + H(+)</text>
        <dbReference type="Rhea" id="RHEA:19669"/>
        <dbReference type="ChEBI" id="CHEBI:15377"/>
        <dbReference type="ChEBI" id="CHEBI:15378"/>
        <dbReference type="ChEBI" id="CHEBI:37565"/>
        <dbReference type="ChEBI" id="CHEBI:43474"/>
        <dbReference type="ChEBI" id="CHEBI:58189"/>
    </reaction>
    <physiologicalReaction direction="left-to-right" evidence="3">
        <dbReference type="Rhea" id="RHEA:19670"/>
    </physiologicalReaction>
</comment>
<comment type="cofactor">
    <cofactor evidence="3">
        <name>Mg(2+)</name>
        <dbReference type="ChEBI" id="CHEBI:18420"/>
    </cofactor>
</comment>
<comment type="subunit">
    <text>Dimer of alpha and beta chains. A typical microtubule is a hollow water-filled tube with an outer diameter of 25 nm and an inner diameter of 15 nM. Alpha-beta heterodimers associate head-to-tail to form protofilaments running lengthwise along the microtubule wall with the beta-tubulin subunit facing the microtubule plus end conferring a structural polarity. Microtubules usually have 13 protofilaments but different protofilament numbers can be found in some organisms and specialized cells.</text>
</comment>
<comment type="subcellular location">
    <subcellularLocation>
        <location>Cytoplasm</location>
        <location>Cytoskeleton</location>
    </subcellularLocation>
</comment>
<comment type="tissue specificity">
    <text evidence="12">Expressed in the cornea, sclera, and peripheral blood (PubMed:29051577).</text>
</comment>
<comment type="domain">
    <text evidence="3">The MREC motif may be critical for tubulin autoregulation.</text>
</comment>
<comment type="PTM">
    <text evidence="6 10">Some glutamate residues at the C-terminus are polyglutamylated, resulting in polyglutamate chains on the gamma-carboxyl group (PubMed:26875866). Polyglutamylation plays a key role in microtubule severing by spastin (SPAST). SPAST preferentially recognizes and acts on microtubules decorated with short polyglutamate tails: severing activity by SPAST increases as the number of glutamates per tubulin rises from one to eight, but decreases beyond this glutamylation threshold (PubMed:26875866). Glutamylation is also involved in cilia motility (By similarity).</text>
</comment>
<comment type="PTM">
    <text evidence="2 16">Some glutamate residues at the C-terminus are monoglycylated but not polyglycylated due to the absence of functional TTLL10 in human. Monoglycylation is mainly limited to tubulin incorporated into cilia and flagella axonemes, which is required for their stability and maintenance. Flagella glycylation controls sperm motility. Both polyglutamylation and monoglycylation can coexist on the same protein on adjacent residues, and lowering glycylation levels increases polyglutamylation, and reciprocally.</text>
</comment>
<comment type="PTM">
    <text evidence="8">Acetylation of alpha chains at Lys-40 is located inside the microtubule lumen. This modification has been correlated with increased microtubule stability, intracellular transport and ciliary assembly.</text>
</comment>
<comment type="PTM">
    <text evidence="3">Methylation of alpha chains at Lys-40 is found in mitotic microtubules and is required for normal mitosis and cytokinesis contributing to genomic stability.</text>
</comment>
<comment type="PTM">
    <text evidence="7">Nitration of Tyr-450 is irreversible and interferes with normal dynein intracellular distribution.</text>
</comment>
<comment type="PTM">
    <text evidence="9 11 13 14">Undergoes a tyrosination/detyrosination cycle, the cyclic removal and re-addition of a C-terminal tyrosine residue by the enzymes tubulin tyrosine carboxypeptidase (MATCAP1/KIAA0895L, VASH1 or VASH2) and tubulin tyrosine ligase (TTL), respectively.</text>
</comment>
<comment type="PTM">
    <molecule>Tubulin alpha-3D chain</molecule>
    <text evidence="4 7 11">Tyrosination promotes microtubule interaction with CAP-Gly domain-containing proteins such as CLIP1, CLIP2 and DCTN1 (By similarity). Tyrosination regulates the initiation of dynein-dynactin motility via interaction with DCTN1, which brings the dynein-dynactin complex into contact with microtubules (PubMed:26972003). In neurons, tyrosinated tubulins mediate the initiation of retrograde vesicle transport (By similarity).</text>
</comment>
<comment type="PTM">
    <molecule>Detyrosinated tubulin alpha-3D chain</molecule>
    <text evidence="1 9">Detyrosination is involved in metaphase plate congression by guiding chromosomes during mitosis: detyrosination promotes interaction with CENPE, promoting pole-proximal transport of chromosomes toward the equator (PubMed:25908662). Detyrosination increases microtubules-dependent mechanotransduction in dystrophic cardiac and skeletal muscle. In cardiomyocytes, detyrosinated microtubules are required to resist to contractile compression during contraction: detyrosination promotes association with desmin (DES) at force-generating sarcomeres, leading to buckled microtubules and mechanical resistance to contraction (By similarity).</text>
</comment>
<comment type="disease" evidence="12">
    <disease id="DI-05225">
        <name>Keratoconus 9</name>
        <acronym>KTCN9</acronym>
        <description>An autosomal dominant form of keratoconus, a common degenerative corneal disease characterized by progressive, non-inflammatory thinning of the corneal stroma, corneal ectasia, and cone-shaped corneal protrusion that results in reduced vision.</description>
        <dbReference type="MIM" id="617928"/>
    </disease>
    <text>The disease is caused by variants affecting the gene represented in this entry.</text>
</comment>
<comment type="similarity">
    <text evidence="15">Belongs to the tubulin family.</text>
</comment>
<comment type="online information" name="Wikipedia">
    <link uri="https://en.wikipedia.org/wiki/Tubulin"/>
    <text>Tubulin entry</text>
</comment>
<evidence type="ECO:0000250" key="1">
    <source>
        <dbReference type="UniProtKB" id="P05214"/>
    </source>
</evidence>
<evidence type="ECO:0000250" key="2">
    <source>
        <dbReference type="UniProtKB" id="P07437"/>
    </source>
</evidence>
<evidence type="ECO:0000250" key="3">
    <source>
        <dbReference type="UniProtKB" id="P68363"/>
    </source>
</evidence>
<evidence type="ECO:0000250" key="4">
    <source>
        <dbReference type="UniProtKB" id="P68369"/>
    </source>
</evidence>
<evidence type="ECO:0000250" key="5">
    <source>
        <dbReference type="UniProtKB" id="P68373"/>
    </source>
</evidence>
<evidence type="ECO:0000250" key="6">
    <source>
        <dbReference type="UniProtKB" id="P99024"/>
    </source>
</evidence>
<evidence type="ECO:0000250" key="7">
    <source>
        <dbReference type="UniProtKB" id="Q71U36"/>
    </source>
</evidence>
<evidence type="ECO:0000269" key="8">
    <source>
    </source>
</evidence>
<evidence type="ECO:0000269" key="9">
    <source>
    </source>
</evidence>
<evidence type="ECO:0000269" key="10">
    <source>
    </source>
</evidence>
<evidence type="ECO:0000269" key="11">
    <source>
    </source>
</evidence>
<evidence type="ECO:0000269" key="12">
    <source>
    </source>
</evidence>
<evidence type="ECO:0000269" key="13">
    <source>
    </source>
</evidence>
<evidence type="ECO:0000269" key="14">
    <source>
    </source>
</evidence>
<evidence type="ECO:0000305" key="15"/>
<evidence type="ECO:0000305" key="16">
    <source>
    </source>
</evidence>
<evidence type="ECO:0000305" key="17">
    <source>
    </source>
</evidence>
<evidence type="ECO:0000305" key="18">
    <source>
    </source>
</evidence>
<gene>
    <name type="primary">TUBA3D</name>
</gene>
<sequence length="450" mass="49960">MRECISIHVGQAGVQIGNACWELYCLEHGIQPDGQMPSDKTIGGGDDSFNTFFSETGAGKHVPRAVFVDLEPTVVDEVRTGTYRQLFHPEQLITGKEDAANNYARGHYTIGKEIVDLVLDRIRKLADLCTGLQGFLIFHSFGGGTGSGFASLLMERLSVDYGKKSKLEFAIYPAPQVSTAVVEPYNSILTTHTTLEHSDCAFMVDNEAIYDICRRNLDIERPTYTNLNRLIGQIVSSITASLRFDGALNVDLTEFQTNLVPYPRIHFPLATYAPVISAEKAYHEQLSVAEITNACFEPANQMVKCDPRHGKYMACCMLYRGDVVPKDVNAAIATIKTKRTIQFVDWCPTGFKVGINYQPPTVVPGGDLAKVQRAVCMLSNTTAIAEAWARLDHKFDLMYAKRAFVHWYVGEGMEEGEFSEAREDLAALEKDYEEVGVDSVEAEAEEGEEY</sequence>
<organism>
    <name type="scientific">Homo sapiens</name>
    <name type="common">Human</name>
    <dbReference type="NCBI Taxonomy" id="9606"/>
    <lineage>
        <taxon>Eukaryota</taxon>
        <taxon>Metazoa</taxon>
        <taxon>Chordata</taxon>
        <taxon>Craniata</taxon>
        <taxon>Vertebrata</taxon>
        <taxon>Euteleostomi</taxon>
        <taxon>Mammalia</taxon>
        <taxon>Eutheria</taxon>
        <taxon>Euarchontoglires</taxon>
        <taxon>Primates</taxon>
        <taxon>Haplorrhini</taxon>
        <taxon>Catarrhini</taxon>
        <taxon>Hominidae</taxon>
        <taxon>Homo</taxon>
    </lineage>
</organism>
<name>TBA3D_HUMAN</name>
<keyword id="KW-0007">Acetylation</keyword>
<keyword id="KW-0963">Cytoplasm</keyword>
<keyword id="KW-0206">Cytoskeleton</keyword>
<keyword id="KW-0225">Disease variant</keyword>
<keyword id="KW-0342">GTP-binding</keyword>
<keyword id="KW-0378">Hydrolase</keyword>
<keyword id="KW-1017">Isopeptide bond</keyword>
<keyword id="KW-0460">Magnesium</keyword>
<keyword id="KW-0479">Metal-binding</keyword>
<keyword id="KW-0488">Methylation</keyword>
<keyword id="KW-0493">Microtubule</keyword>
<keyword id="KW-0944">Nitration</keyword>
<keyword id="KW-0547">Nucleotide-binding</keyword>
<keyword id="KW-0597">Phosphoprotein</keyword>
<keyword id="KW-1185">Reference proteome</keyword>
<protein>
    <recommendedName>
        <fullName>Tubulin alpha-3D chain</fullName>
        <ecNumber evidence="3">3.6.5.-</ecNumber>
    </recommendedName>
    <alternativeName>
        <fullName>Alpha-tubulin 3D</fullName>
    </alternativeName>
    <component>
        <recommendedName>
            <fullName>Detyrosinated tubulin alpha-3D chain</fullName>
        </recommendedName>
    </component>
</protein>
<dbReference type="EC" id="3.6.5.-" evidence="3"/>
<dbReference type="EMBL" id="AC073869">
    <property type="status" value="NOT_ANNOTATED_CDS"/>
    <property type="molecule type" value="Genomic_DNA"/>
</dbReference>
<dbReference type="EMBL" id="BC057810">
    <property type="protein sequence ID" value="AAH57810.1"/>
    <property type="molecule type" value="mRNA"/>
</dbReference>
<dbReference type="CCDS" id="CCDS33290.1"/>
<dbReference type="RefSeq" id="NP_525125.2">
    <property type="nucleotide sequence ID" value="NM_080386.4"/>
</dbReference>
<dbReference type="SMR" id="P0DPH8"/>
<dbReference type="FunCoup" id="P0DPH8">
    <property type="interactions" value="581"/>
</dbReference>
<dbReference type="DrugBank" id="DB09130">
    <property type="generic name" value="Copper"/>
</dbReference>
<dbReference type="DrugBank" id="DB05147">
    <property type="generic name" value="CYT997"/>
</dbReference>
<dbReference type="DrugBank" id="DB01873">
    <property type="generic name" value="Epothilone D"/>
</dbReference>
<dbReference type="DrugBank" id="DB03010">
    <property type="generic name" value="Patupilone"/>
</dbReference>
<dbReference type="DrugBank" id="DB12695">
    <property type="generic name" value="Phenethyl Isothiocyanate"/>
</dbReference>
<dbReference type="GlyGen" id="P0DPH8">
    <property type="glycosylation" value="1 site, 1 O-linked glycan (1 site)"/>
</dbReference>
<dbReference type="iPTMnet" id="P0DPH8"/>
<dbReference type="PhosphoSitePlus" id="P0DPH8"/>
<dbReference type="jPOST" id="P0DPH8"/>
<dbReference type="MassIVE" id="P0DPH8"/>
<dbReference type="Pumba" id="P0DPH8"/>
<dbReference type="Antibodypedia" id="60456">
    <property type="antibodies" value="49 antibodies from 11 providers"/>
</dbReference>
<dbReference type="DNASU" id="7278"/>
<dbReference type="Ensembl" id="ENST00000321253.7">
    <property type="protein sequence ID" value="ENSP00000326042.6"/>
    <property type="gene ID" value="ENSG00000075886.11"/>
</dbReference>
<dbReference type="GeneID" id="113457"/>
<dbReference type="KEGG" id="hsa:113457"/>
<dbReference type="KEGG" id="hsa:7278"/>
<dbReference type="MANE-Select" id="ENST00000321253.7">
    <property type="protein sequence ID" value="ENSP00000326042.6"/>
    <property type="RefSeq nucleotide sequence ID" value="NM_080386.4"/>
    <property type="RefSeq protein sequence ID" value="NP_525125.2"/>
</dbReference>
<dbReference type="AGR" id="HGNC:24071"/>
<dbReference type="CTD" id="113457"/>
<dbReference type="DisGeNET" id="113457"/>
<dbReference type="GeneCards" id="TUBA3D"/>
<dbReference type="HGNC" id="HGNC:24071">
    <property type="gene designation" value="TUBA3D"/>
</dbReference>
<dbReference type="HPA" id="ENSG00000075886">
    <property type="expression patterns" value="Group enriched (heart muscle, testis)"/>
</dbReference>
<dbReference type="MalaCards" id="TUBA3D"/>
<dbReference type="MIM" id="617878">
    <property type="type" value="gene"/>
</dbReference>
<dbReference type="MIM" id="617928">
    <property type="type" value="phenotype"/>
</dbReference>
<dbReference type="neXtProt" id="NX_P0DPH8"/>
<dbReference type="OpenTargets" id="ENSG00000075886"/>
<dbReference type="OpenTargets" id="ENSG00000198033"/>
<dbReference type="VEuPathDB" id="HostDB:ENSG00000075886"/>
<dbReference type="GeneTree" id="ENSGT00950000182825"/>
<dbReference type="InParanoid" id="P0DPH8"/>
<dbReference type="OMA" id="YMASCIL"/>
<dbReference type="OrthoDB" id="9515037at2759"/>
<dbReference type="PAN-GO" id="P0DPH8">
    <property type="GO annotations" value="6 GO annotations based on evolutionary models"/>
</dbReference>
<dbReference type="PathwayCommons" id="P0DPH8"/>
<dbReference type="Reactome" id="R-HSA-1445148">
    <property type="pathway name" value="Translocation of SLC2A4 (GLUT4) to the plasma membrane"/>
</dbReference>
<dbReference type="Reactome" id="R-HSA-190840">
    <property type="pathway name" value="Microtubule-dependent trafficking of connexons from Golgi to the plasma membrane"/>
</dbReference>
<dbReference type="Reactome" id="R-HSA-190861">
    <property type="pathway name" value="Gap junction assembly"/>
</dbReference>
<dbReference type="Reactome" id="R-HSA-2132295">
    <property type="pathway name" value="MHC class II antigen presentation"/>
</dbReference>
<dbReference type="Reactome" id="R-HSA-2467813">
    <property type="pathway name" value="Separation of Sister Chromatids"/>
</dbReference>
<dbReference type="Reactome" id="R-HSA-2500257">
    <property type="pathway name" value="Resolution of Sister Chromatid Cohesion"/>
</dbReference>
<dbReference type="Reactome" id="R-HSA-3371497">
    <property type="pathway name" value="HSP90 chaperone cycle for steroid hormone receptors (SHR) in the presence of ligand"/>
</dbReference>
<dbReference type="Reactome" id="R-HSA-380320">
    <property type="pathway name" value="Recruitment of NuMA to mitotic centrosomes"/>
</dbReference>
<dbReference type="Reactome" id="R-HSA-389957">
    <property type="pathway name" value="Prefoldin mediated transfer of substrate to CCT/TriC"/>
</dbReference>
<dbReference type="Reactome" id="R-HSA-389960">
    <property type="pathway name" value="Formation of tubulin folding intermediates by CCT/TriC"/>
</dbReference>
<dbReference type="Reactome" id="R-HSA-389977">
    <property type="pathway name" value="Post-chaperonin tubulin folding pathway"/>
</dbReference>
<dbReference type="Reactome" id="R-HSA-437239">
    <property type="pathway name" value="Recycling pathway of L1"/>
</dbReference>
<dbReference type="Reactome" id="R-HSA-5610787">
    <property type="pathway name" value="Hedgehog 'off' state"/>
</dbReference>
<dbReference type="Reactome" id="R-HSA-5617833">
    <property type="pathway name" value="Cilium Assembly"/>
</dbReference>
<dbReference type="Reactome" id="R-HSA-5620924">
    <property type="pathway name" value="Intraflagellar transport"/>
</dbReference>
<dbReference type="Reactome" id="R-HSA-5626467">
    <property type="pathway name" value="RHO GTPases activate IQGAPs"/>
</dbReference>
<dbReference type="Reactome" id="R-HSA-5663220">
    <property type="pathway name" value="RHO GTPases Activate Formins"/>
</dbReference>
<dbReference type="Reactome" id="R-HSA-6807878">
    <property type="pathway name" value="COPI-mediated anterograde transport"/>
</dbReference>
<dbReference type="Reactome" id="R-HSA-6811434">
    <property type="pathway name" value="COPI-dependent Golgi-to-ER retrograde traffic"/>
</dbReference>
<dbReference type="Reactome" id="R-HSA-6811436">
    <property type="pathway name" value="COPI-independent Golgi-to-ER retrograde traffic"/>
</dbReference>
<dbReference type="Reactome" id="R-HSA-68877">
    <property type="pathway name" value="Mitotic Prometaphase"/>
</dbReference>
<dbReference type="Reactome" id="R-HSA-8852276">
    <property type="pathway name" value="The role of GTSE1 in G2/M progression after G2 checkpoint"/>
</dbReference>
<dbReference type="Reactome" id="R-HSA-8955332">
    <property type="pathway name" value="Carboxyterminal post-translational modifications of tubulin"/>
</dbReference>
<dbReference type="Reactome" id="R-HSA-9609690">
    <property type="pathway name" value="HCMV Early Events"/>
</dbReference>
<dbReference type="Reactome" id="R-HSA-9609736">
    <property type="pathway name" value="Assembly and cell surface presentation of NMDA receptors"/>
</dbReference>
<dbReference type="Reactome" id="R-HSA-9619483">
    <property type="pathway name" value="Activation of AMPK downstream of NMDARs"/>
</dbReference>
<dbReference type="Reactome" id="R-HSA-9646399">
    <property type="pathway name" value="Aggrephagy"/>
</dbReference>
<dbReference type="Reactome" id="R-HSA-9648025">
    <property type="pathway name" value="EML4 and NUDC in mitotic spindle formation"/>
</dbReference>
<dbReference type="Reactome" id="R-HSA-9668328">
    <property type="pathway name" value="Sealing of the nuclear envelope (NE) by ESCRT-III"/>
</dbReference>
<dbReference type="Reactome" id="R-HSA-983189">
    <property type="pathway name" value="Kinesins"/>
</dbReference>
<dbReference type="Reactome" id="R-HSA-9833482">
    <property type="pathway name" value="PKR-mediated signaling"/>
</dbReference>
<dbReference type="SIGNOR" id="P0DPH8"/>
<dbReference type="CD-CODE" id="91857CE7">
    <property type="entry name" value="Nucleolus"/>
</dbReference>
<dbReference type="CD-CODE" id="DEE660B4">
    <property type="entry name" value="Stress granule"/>
</dbReference>
<dbReference type="ChiTaRS" id="TUBA3D">
    <property type="organism name" value="human"/>
</dbReference>
<dbReference type="Pharos" id="P0DPH8">
    <property type="development level" value="Tdark"/>
</dbReference>
<dbReference type="PRO" id="PR:P0DPH8"/>
<dbReference type="Proteomes" id="UP000005640">
    <property type="component" value="Chromosome 2"/>
</dbReference>
<dbReference type="Bgee" id="ENSG00000075886">
    <property type="expression patterns" value="Expressed in right testis and 95 other cell types or tissues"/>
</dbReference>
<dbReference type="ExpressionAtlas" id="P0DPH8">
    <property type="expression patterns" value="baseline and differential"/>
</dbReference>
<dbReference type="GO" id="GO:0005929">
    <property type="term" value="C:cilium"/>
    <property type="evidence" value="ECO:0000314"/>
    <property type="project" value="HPA"/>
</dbReference>
<dbReference type="GO" id="GO:0005737">
    <property type="term" value="C:cytoplasm"/>
    <property type="evidence" value="ECO:0000318"/>
    <property type="project" value="GO_Central"/>
</dbReference>
<dbReference type="GO" id="GO:0005874">
    <property type="term" value="C:microtubule"/>
    <property type="evidence" value="ECO:0000318"/>
    <property type="project" value="GO_Central"/>
</dbReference>
<dbReference type="GO" id="GO:0015630">
    <property type="term" value="C:microtubule cytoskeleton"/>
    <property type="evidence" value="ECO:0000314"/>
    <property type="project" value="HPA"/>
</dbReference>
<dbReference type="GO" id="GO:0005525">
    <property type="term" value="F:GTP binding"/>
    <property type="evidence" value="ECO:0000318"/>
    <property type="project" value="GO_Central"/>
</dbReference>
<dbReference type="GO" id="GO:0016787">
    <property type="term" value="F:hydrolase activity"/>
    <property type="evidence" value="ECO:0007669"/>
    <property type="project" value="UniProtKB-KW"/>
</dbReference>
<dbReference type="GO" id="GO:0046872">
    <property type="term" value="F:metal ion binding"/>
    <property type="evidence" value="ECO:0007669"/>
    <property type="project" value="UniProtKB-KW"/>
</dbReference>
<dbReference type="GO" id="GO:0005200">
    <property type="term" value="F:structural constituent of cytoskeleton"/>
    <property type="evidence" value="ECO:0000318"/>
    <property type="project" value="GO_Central"/>
</dbReference>
<dbReference type="GO" id="GO:0000226">
    <property type="term" value="P:microtubule cytoskeleton organization"/>
    <property type="evidence" value="ECO:0000318"/>
    <property type="project" value="GO_Central"/>
</dbReference>
<dbReference type="GO" id="GO:0000278">
    <property type="term" value="P:mitotic cell cycle"/>
    <property type="evidence" value="ECO:0000318"/>
    <property type="project" value="GO_Central"/>
</dbReference>
<dbReference type="CDD" id="cd02186">
    <property type="entry name" value="alpha_tubulin"/>
    <property type="match status" value="1"/>
</dbReference>
<dbReference type="FunFam" id="1.10.287.600:FF:000005">
    <property type="entry name" value="Tubulin alpha chain"/>
    <property type="match status" value="1"/>
</dbReference>
<dbReference type="FunFam" id="3.30.1330.20:FF:000001">
    <property type="entry name" value="Tubulin alpha chain"/>
    <property type="match status" value="1"/>
</dbReference>
<dbReference type="FunFam" id="3.40.50.1440:FF:000002">
    <property type="entry name" value="Tubulin alpha chain"/>
    <property type="match status" value="1"/>
</dbReference>
<dbReference type="Gene3D" id="1.10.287.600">
    <property type="entry name" value="Helix hairpin bin"/>
    <property type="match status" value="1"/>
</dbReference>
<dbReference type="Gene3D" id="3.30.1330.20">
    <property type="entry name" value="Tubulin/FtsZ, C-terminal domain"/>
    <property type="match status" value="1"/>
</dbReference>
<dbReference type="Gene3D" id="3.40.50.1440">
    <property type="entry name" value="Tubulin/FtsZ, GTPase domain"/>
    <property type="match status" value="1"/>
</dbReference>
<dbReference type="InterPro" id="IPR002452">
    <property type="entry name" value="Alpha_tubulin"/>
</dbReference>
<dbReference type="InterPro" id="IPR008280">
    <property type="entry name" value="Tub_FtsZ_C"/>
</dbReference>
<dbReference type="InterPro" id="IPR000217">
    <property type="entry name" value="Tubulin"/>
</dbReference>
<dbReference type="InterPro" id="IPR037103">
    <property type="entry name" value="Tubulin/FtsZ-like_C"/>
</dbReference>
<dbReference type="InterPro" id="IPR018316">
    <property type="entry name" value="Tubulin/FtsZ_2-layer-sand-dom"/>
</dbReference>
<dbReference type="InterPro" id="IPR036525">
    <property type="entry name" value="Tubulin/FtsZ_GTPase_sf"/>
</dbReference>
<dbReference type="InterPro" id="IPR023123">
    <property type="entry name" value="Tubulin_C"/>
</dbReference>
<dbReference type="InterPro" id="IPR017975">
    <property type="entry name" value="Tubulin_CS"/>
</dbReference>
<dbReference type="InterPro" id="IPR003008">
    <property type="entry name" value="Tubulin_FtsZ_GTPase"/>
</dbReference>
<dbReference type="PANTHER" id="PTHR11588">
    <property type="entry name" value="TUBULIN"/>
    <property type="match status" value="1"/>
</dbReference>
<dbReference type="Pfam" id="PF00091">
    <property type="entry name" value="Tubulin"/>
    <property type="match status" value="1"/>
</dbReference>
<dbReference type="Pfam" id="PF03953">
    <property type="entry name" value="Tubulin_C"/>
    <property type="match status" value="1"/>
</dbReference>
<dbReference type="PRINTS" id="PR01162">
    <property type="entry name" value="ALPHATUBULIN"/>
</dbReference>
<dbReference type="PRINTS" id="PR01161">
    <property type="entry name" value="TUBULIN"/>
</dbReference>
<dbReference type="SMART" id="SM00864">
    <property type="entry name" value="Tubulin"/>
    <property type="match status" value="1"/>
</dbReference>
<dbReference type="SMART" id="SM00865">
    <property type="entry name" value="Tubulin_C"/>
    <property type="match status" value="1"/>
</dbReference>
<dbReference type="SUPFAM" id="SSF55307">
    <property type="entry name" value="Tubulin C-terminal domain-like"/>
    <property type="match status" value="1"/>
</dbReference>
<dbReference type="SUPFAM" id="SSF52490">
    <property type="entry name" value="Tubulin nucleotide-binding domain-like"/>
    <property type="match status" value="1"/>
</dbReference>
<dbReference type="PROSITE" id="PS00227">
    <property type="entry name" value="TUBULIN"/>
    <property type="match status" value="1"/>
</dbReference>
<reference key="1">
    <citation type="journal article" date="2005" name="Nature">
        <title>Generation and annotation of the DNA sequences of human chromosomes 2 and 4.</title>
        <authorList>
            <person name="Hillier L.W."/>
            <person name="Graves T.A."/>
            <person name="Fulton R.S."/>
            <person name="Fulton L.A."/>
            <person name="Pepin K.H."/>
            <person name="Minx P."/>
            <person name="Wagner-McPherson C."/>
            <person name="Layman D."/>
            <person name="Wylie K."/>
            <person name="Sekhon M."/>
            <person name="Becker M.C."/>
            <person name="Fewell G.A."/>
            <person name="Delehaunty K.D."/>
            <person name="Miner T.L."/>
            <person name="Nash W.E."/>
            <person name="Kremitzki C."/>
            <person name="Oddy L."/>
            <person name="Du H."/>
            <person name="Sun H."/>
            <person name="Bradshaw-Cordum H."/>
            <person name="Ali J."/>
            <person name="Carter J."/>
            <person name="Cordes M."/>
            <person name="Harris A."/>
            <person name="Isak A."/>
            <person name="van Brunt A."/>
            <person name="Nguyen C."/>
            <person name="Du F."/>
            <person name="Courtney L."/>
            <person name="Kalicki J."/>
            <person name="Ozersky P."/>
            <person name="Abbott S."/>
            <person name="Armstrong J."/>
            <person name="Belter E.A."/>
            <person name="Caruso L."/>
            <person name="Cedroni M."/>
            <person name="Cotton M."/>
            <person name="Davidson T."/>
            <person name="Desai A."/>
            <person name="Elliott G."/>
            <person name="Erb T."/>
            <person name="Fronick C."/>
            <person name="Gaige T."/>
            <person name="Haakenson W."/>
            <person name="Haglund K."/>
            <person name="Holmes A."/>
            <person name="Harkins R."/>
            <person name="Kim K."/>
            <person name="Kruchowski S.S."/>
            <person name="Strong C.M."/>
            <person name="Grewal N."/>
            <person name="Goyea E."/>
            <person name="Hou S."/>
            <person name="Levy A."/>
            <person name="Martinka S."/>
            <person name="Mead K."/>
            <person name="McLellan M.D."/>
            <person name="Meyer R."/>
            <person name="Randall-Maher J."/>
            <person name="Tomlinson C."/>
            <person name="Dauphin-Kohlberg S."/>
            <person name="Kozlowicz-Reilly A."/>
            <person name="Shah N."/>
            <person name="Swearengen-Shahid S."/>
            <person name="Snider J."/>
            <person name="Strong J.T."/>
            <person name="Thompson J."/>
            <person name="Yoakum M."/>
            <person name="Leonard S."/>
            <person name="Pearman C."/>
            <person name="Trani L."/>
            <person name="Radionenko M."/>
            <person name="Waligorski J.E."/>
            <person name="Wang C."/>
            <person name="Rock S.M."/>
            <person name="Tin-Wollam A.-M."/>
            <person name="Maupin R."/>
            <person name="Latreille P."/>
            <person name="Wendl M.C."/>
            <person name="Yang S.-P."/>
            <person name="Pohl C."/>
            <person name="Wallis J.W."/>
            <person name="Spieth J."/>
            <person name="Bieri T.A."/>
            <person name="Berkowicz N."/>
            <person name="Nelson J.O."/>
            <person name="Osborne J."/>
            <person name="Ding L."/>
            <person name="Meyer R."/>
            <person name="Sabo A."/>
            <person name="Shotland Y."/>
            <person name="Sinha P."/>
            <person name="Wohldmann P.E."/>
            <person name="Cook L.L."/>
            <person name="Hickenbotham M.T."/>
            <person name="Eldred J."/>
            <person name="Williams D."/>
            <person name="Jones T.A."/>
            <person name="She X."/>
            <person name="Ciccarelli F.D."/>
            <person name="Izaurralde E."/>
            <person name="Taylor J."/>
            <person name="Schmutz J."/>
            <person name="Myers R.M."/>
            <person name="Cox D.R."/>
            <person name="Huang X."/>
            <person name="McPherson J.D."/>
            <person name="Mardis E.R."/>
            <person name="Clifton S.W."/>
            <person name="Warren W.C."/>
            <person name="Chinwalla A.T."/>
            <person name="Eddy S.R."/>
            <person name="Marra M.A."/>
            <person name="Ovcharenko I."/>
            <person name="Furey T.S."/>
            <person name="Miller W."/>
            <person name="Eichler E.E."/>
            <person name="Bork P."/>
            <person name="Suyama M."/>
            <person name="Torrents D."/>
            <person name="Waterston R.H."/>
            <person name="Wilson R.K."/>
        </authorList>
    </citation>
    <scope>NUCLEOTIDE SEQUENCE [LARGE SCALE GENOMIC DNA]</scope>
</reference>
<reference key="2">
    <citation type="journal article" date="2004" name="Genome Res.">
        <title>The status, quality, and expansion of the NIH full-length cDNA project: the Mammalian Gene Collection (MGC).</title>
        <authorList>
            <consortium name="The MGC Project Team"/>
        </authorList>
    </citation>
    <scope>NUCLEOTIDE SEQUENCE [LARGE SCALE MRNA]</scope>
    <source>
        <tissue>Testis</tissue>
    </source>
</reference>
<reference key="3">
    <citation type="journal article" date="2009" name="Cell">
        <title>Evolutionary divergence of enzymatic mechanisms for posttranslational polyglycylation.</title>
        <authorList>
            <person name="Rogowski K."/>
            <person name="Juge F."/>
            <person name="van Dijk J."/>
            <person name="Wloga D."/>
            <person name="Strub J.-M."/>
            <person name="Levilliers N."/>
            <person name="Thomas D."/>
            <person name="Bre M.-H."/>
            <person name="Van Dorsselaer A."/>
            <person name="Gaertig J."/>
            <person name="Janke C."/>
        </authorList>
    </citation>
    <scope>GLYCYLATION</scope>
</reference>
<reference key="4">
    <citation type="journal article" date="2014" name="Cell">
        <title>Molecular basis for age-dependent microtubule acetylation by tubulin acetyltransferase.</title>
        <authorList>
            <person name="Szyk A."/>
            <person name="Deaconescu A.M."/>
            <person name="Spector J."/>
            <person name="Goodman B."/>
            <person name="Valenstein M.L."/>
            <person name="Ziolkowska N.E."/>
            <person name="Kormendi V."/>
            <person name="Grigorieff N."/>
            <person name="Roll-Mecak A."/>
        </authorList>
    </citation>
    <scope>ACETYLATION AT LYS-40</scope>
</reference>
<reference key="5">
    <citation type="journal article" date="2015" name="Science">
        <title>Mitosis. Microtubule detyrosination guides chromosomes during mitosis.</title>
        <authorList>
            <person name="Barisic M."/>
            <person name="Silva e Sousa R."/>
            <person name="Tripathy S.K."/>
            <person name="Magiera M.M."/>
            <person name="Zaytsev A.V."/>
            <person name="Pereira A.L."/>
            <person name="Janke C."/>
            <person name="Grishchuk E.L."/>
            <person name="Maiato H."/>
        </authorList>
    </citation>
    <scope>DETYROSINATION</scope>
</reference>
<reference key="6">
    <citation type="journal article" date="2016" name="Cell">
        <title>Graded control of microtubule severing by tubulin glutamylation.</title>
        <authorList>
            <person name="Valenstein M.L."/>
            <person name="Roll-Mecak A."/>
        </authorList>
    </citation>
    <scope>GLUTAMYLATION</scope>
</reference>
<reference key="7">
    <citation type="journal article" date="2016" name="Cell Rep.">
        <title>Alpha-tubulin tyrosination and CLIP-170 phosphorylation regulate the initiation of dynein-driven transport in neurons.</title>
        <authorList>
            <person name="Nirschl J.J."/>
            <person name="Magiera M.M."/>
            <person name="Lazarus J.E."/>
            <person name="Janke C."/>
            <person name="Holzbaur E.L."/>
        </authorList>
    </citation>
    <scope>TYROSINATION</scope>
</reference>
<reference key="8">
    <citation type="journal article" date="2017" name="Sci. Rep.">
        <title>De novo mutations of TUBA3D are associated with keratoconus.</title>
        <authorList>
            <person name="Hao X.D."/>
            <person name="Chen P."/>
            <person name="Zhang Y.Y."/>
            <person name="Li S.X."/>
            <person name="Shi W.Y."/>
            <person name="Gao H."/>
        </authorList>
    </citation>
    <scope>TISSUE SPECIFICITY</scope>
    <scope>INVOLVEMENT IN KTCN9</scope>
    <scope>VARIANT KTCN9 11-GLN--TYR-450 DEL</scope>
</reference>
<reference key="9">
    <citation type="journal article" date="2017" name="Science">
        <title>Vasohibins encode tubulin detyrosinating activity.</title>
        <authorList>
            <person name="Nieuwenhuis J."/>
            <person name="Adamopoulos A."/>
            <person name="Bleijerveld O.B."/>
            <person name="Mazouzi A."/>
            <person name="Stickel E."/>
            <person name="Celie P."/>
            <person name="Altelaar M."/>
            <person name="Knipscheer P."/>
            <person name="Perrakis A."/>
            <person name="Blomen V.A."/>
            <person name="Brummelkamp T.R."/>
        </authorList>
    </citation>
    <scope>DETYROSINATION</scope>
</reference>
<reference key="10">
    <citation type="journal article" date="2022" name="Science">
        <title>Posttranslational modification of microtubules by the MATCAP detyrosinase.</title>
        <authorList>
            <person name="Landskron L."/>
            <person name="Bak J."/>
            <person name="Adamopoulos A."/>
            <person name="Kaplani K."/>
            <person name="Moraiti M."/>
            <person name="van den Hengel L.G."/>
            <person name="Song J.Y."/>
            <person name="Bleijerveld O.B."/>
            <person name="Nieuwenhuis J."/>
            <person name="Heidebrecht T."/>
            <person name="Henneman L."/>
            <person name="Moutin M.J."/>
            <person name="Barisic M."/>
            <person name="Taraviras S."/>
            <person name="Perrakis A."/>
            <person name="Brummelkamp T.R."/>
        </authorList>
    </citation>
    <scope>DETYROSINATION</scope>
</reference>
<accession>P0DPH8</accession>
<accession>A6NJQ0</accession>
<accession>Q13748</accession>
<accession>Q5W099</accession>
<accession>Q6PEY3</accession>
<accession>Q96F18</accession>
<proteinExistence type="evidence at protein level"/>